<feature type="chain" id="PRO_0000183833" description="Cytochrome c oxidase subunit 3">
    <location>
        <begin position="1"/>
        <end position="260"/>
    </location>
</feature>
<feature type="transmembrane region" description="Helical" evidence="2">
    <location>
        <begin position="30"/>
        <end position="50"/>
    </location>
</feature>
<feature type="transmembrane region" description="Helical" evidence="2">
    <location>
        <begin position="81"/>
        <end position="101"/>
    </location>
</feature>
<feature type="transmembrane region" description="Helical" evidence="2">
    <location>
        <begin position="126"/>
        <end position="146"/>
    </location>
</feature>
<feature type="transmembrane region" description="Helical" evidence="2">
    <location>
        <begin position="158"/>
        <end position="178"/>
    </location>
</feature>
<feature type="transmembrane region" description="Helical" evidence="2">
    <location>
        <begin position="196"/>
        <end position="216"/>
    </location>
</feature>
<feature type="transmembrane region" description="Helical" evidence="2">
    <location>
        <begin position="239"/>
        <end position="259"/>
    </location>
</feature>
<proteinExistence type="inferred from homology"/>
<gene>
    <name type="primary">COIII</name>
</gene>
<name>COX3_PISOC</name>
<accession>P25003</accession>
<sequence>MTHQHPYHLVDQSPWPLTGAISALMMTSGLILWFHINSTILFILGTVLLVLTIINWWRDIIREATFQGFHTLSVSNGLRYGMILFITSEVCLFFAFFWAFFHSSLAPTIELGVSWPPTGITPINPFLVPLLNTAVLLSSGVTVTWAHHSILSGNRVEAIQSLTLTVFLGVYFTILQAWEYFDSPFTIADSVYGSTFFVATGFHGLHVLIGTAFLAVCLLRLYNFHFSNHHHFGFEAASWYWHFVDVVWLFLYICIYWWGS</sequence>
<dbReference type="EC" id="7.1.1.9"/>
<dbReference type="EMBL" id="X55514">
    <property type="protein sequence ID" value="CAA39129.1"/>
    <property type="molecule type" value="Genomic_DNA"/>
</dbReference>
<dbReference type="PIR" id="S14210">
    <property type="entry name" value="S14210"/>
</dbReference>
<dbReference type="SMR" id="P25003"/>
<dbReference type="GO" id="GO:0005743">
    <property type="term" value="C:mitochondrial inner membrane"/>
    <property type="evidence" value="ECO:0007669"/>
    <property type="project" value="UniProtKB-SubCell"/>
</dbReference>
<dbReference type="GO" id="GO:0004129">
    <property type="term" value="F:cytochrome-c oxidase activity"/>
    <property type="evidence" value="ECO:0007669"/>
    <property type="project" value="UniProtKB-EC"/>
</dbReference>
<dbReference type="GO" id="GO:0006123">
    <property type="term" value="P:mitochondrial electron transport, cytochrome c to oxygen"/>
    <property type="evidence" value="ECO:0007669"/>
    <property type="project" value="TreeGrafter"/>
</dbReference>
<dbReference type="CDD" id="cd01665">
    <property type="entry name" value="Cyt_c_Oxidase_III"/>
    <property type="match status" value="1"/>
</dbReference>
<dbReference type="FunFam" id="1.10.287.70:FF:000082">
    <property type="entry name" value="Cytochrome c oxidase subunit 3"/>
    <property type="match status" value="1"/>
</dbReference>
<dbReference type="FunFam" id="1.20.120.80:FF:000002">
    <property type="entry name" value="Cytochrome c oxidase subunit 3"/>
    <property type="match status" value="1"/>
</dbReference>
<dbReference type="Gene3D" id="1.10.287.70">
    <property type="match status" value="1"/>
</dbReference>
<dbReference type="Gene3D" id="1.20.120.80">
    <property type="entry name" value="Cytochrome c oxidase, subunit III, four-helix bundle"/>
    <property type="match status" value="1"/>
</dbReference>
<dbReference type="InterPro" id="IPR024791">
    <property type="entry name" value="Cyt_c/ubiquinol_Oxase_su3"/>
</dbReference>
<dbReference type="InterPro" id="IPR033945">
    <property type="entry name" value="Cyt_c_oxase_su3_dom"/>
</dbReference>
<dbReference type="InterPro" id="IPR000298">
    <property type="entry name" value="Cyt_c_oxidase-like_su3"/>
</dbReference>
<dbReference type="InterPro" id="IPR035973">
    <property type="entry name" value="Cyt_c_oxidase_su3-like_sf"/>
</dbReference>
<dbReference type="InterPro" id="IPR013833">
    <property type="entry name" value="Cyt_c_oxidase_su3_a-hlx"/>
</dbReference>
<dbReference type="PANTHER" id="PTHR11403:SF7">
    <property type="entry name" value="CYTOCHROME C OXIDASE SUBUNIT 3"/>
    <property type="match status" value="1"/>
</dbReference>
<dbReference type="PANTHER" id="PTHR11403">
    <property type="entry name" value="CYTOCHROME C OXIDASE SUBUNIT III"/>
    <property type="match status" value="1"/>
</dbReference>
<dbReference type="Pfam" id="PF00510">
    <property type="entry name" value="COX3"/>
    <property type="match status" value="1"/>
</dbReference>
<dbReference type="SUPFAM" id="SSF81452">
    <property type="entry name" value="Cytochrome c oxidase subunit III-like"/>
    <property type="match status" value="1"/>
</dbReference>
<dbReference type="PROSITE" id="PS50253">
    <property type="entry name" value="COX3"/>
    <property type="match status" value="1"/>
</dbReference>
<reference key="1">
    <citation type="journal article" date="1990" name="J. Mol. Evol.">
        <title>Nucleotide sequence of nine protein-coding genes and 22 tRNAs in the mitochondrial DNA of the sea star Pisaster ochraceus.</title>
        <authorList>
            <person name="Smith M.J."/>
            <person name="Banfield D.K."/>
            <person name="Doteval K."/>
            <person name="Gorski S."/>
            <person name="Kowbel D.J."/>
        </authorList>
    </citation>
    <scope>NUCLEOTIDE SEQUENCE [GENOMIC DNA]</scope>
</reference>
<keyword id="KW-0472">Membrane</keyword>
<keyword id="KW-0496">Mitochondrion</keyword>
<keyword id="KW-0999">Mitochondrion inner membrane</keyword>
<keyword id="KW-1278">Translocase</keyword>
<keyword id="KW-0812">Transmembrane</keyword>
<keyword id="KW-1133">Transmembrane helix</keyword>
<protein>
    <recommendedName>
        <fullName>Cytochrome c oxidase subunit 3</fullName>
        <ecNumber>7.1.1.9</ecNumber>
    </recommendedName>
    <alternativeName>
        <fullName>Cytochrome c oxidase polypeptide III</fullName>
    </alternativeName>
</protein>
<geneLocation type="mitochondrion"/>
<comment type="function">
    <text evidence="1">Component of the cytochrome c oxidase, the last enzyme in the mitochondrial electron transport chain which drives oxidative phosphorylation. The respiratory chain contains 3 multisubunit complexes succinate dehydrogenase (complex II, CII), ubiquinol-cytochrome c oxidoreductase (cytochrome b-c1 complex, complex III, CIII) and cytochrome c oxidase (complex IV, CIV), that cooperate to transfer electrons derived from NADH and succinate to molecular oxygen, creating an electrochemical gradient over the inner membrane that drives transmembrane transport and the ATP synthase. Cytochrome c oxidase is the component of the respiratory chain that catalyzes the reduction of oxygen to water. Electrons originating from reduced cytochrome c in the intermembrane space (IMS) are transferred via the dinuclear copper A center (CU(A)) of subunit 2 and heme A of subunit 1 to the active site in subunit 1, a binuclear center (BNC) formed by heme A3 and copper B (CU(B)). The BNC reduces molecular oxygen to 2 water molecules using 4 electrons from cytochrome c in the IMS and 4 protons from the mitochondrial matrix.</text>
</comment>
<comment type="catalytic activity">
    <reaction evidence="1">
        <text>4 Fe(II)-[cytochrome c] + O2 + 8 H(+)(in) = 4 Fe(III)-[cytochrome c] + 2 H2O + 4 H(+)(out)</text>
        <dbReference type="Rhea" id="RHEA:11436"/>
        <dbReference type="Rhea" id="RHEA-COMP:10350"/>
        <dbReference type="Rhea" id="RHEA-COMP:14399"/>
        <dbReference type="ChEBI" id="CHEBI:15377"/>
        <dbReference type="ChEBI" id="CHEBI:15378"/>
        <dbReference type="ChEBI" id="CHEBI:15379"/>
        <dbReference type="ChEBI" id="CHEBI:29033"/>
        <dbReference type="ChEBI" id="CHEBI:29034"/>
        <dbReference type="EC" id="7.1.1.9"/>
    </reaction>
    <physiologicalReaction direction="left-to-right" evidence="1">
        <dbReference type="Rhea" id="RHEA:11437"/>
    </physiologicalReaction>
</comment>
<comment type="subunit">
    <text evidence="1">Component of the cytochrome c oxidase (complex IV, CIV), a multisubunit enzyme composed of a catalytic core of 3 subunits and several supernumerary subunits. The complex exists as a monomer or a dimer and forms supercomplexes (SCs) in the inner mitochondrial membrane with ubiquinol-cytochrome c oxidoreductase (cytochrome b-c1 complex, complex III, CIII).</text>
</comment>
<comment type="subcellular location">
    <subcellularLocation>
        <location evidence="1">Mitochondrion inner membrane</location>
        <topology evidence="1">Multi-pass membrane protein</topology>
    </subcellularLocation>
</comment>
<comment type="similarity">
    <text evidence="3">Belongs to the cytochrome c oxidase subunit 3 family.</text>
</comment>
<organism>
    <name type="scientific">Pisaster ochraceus</name>
    <name type="common">Ochre sea star</name>
    <name type="synonym">Asterias ochracea</name>
    <dbReference type="NCBI Taxonomy" id="7612"/>
    <lineage>
        <taxon>Eukaryota</taxon>
        <taxon>Metazoa</taxon>
        <taxon>Echinodermata</taxon>
        <taxon>Eleutherozoa</taxon>
        <taxon>Asterozoa</taxon>
        <taxon>Asteroidea</taxon>
        <taxon>Forcipulatacea</taxon>
        <taxon>Forcipulatida</taxon>
        <taxon>Asteriidae</taxon>
        <taxon>Pisaster</taxon>
    </lineage>
</organism>
<evidence type="ECO:0000250" key="1">
    <source>
        <dbReference type="UniProtKB" id="P00420"/>
    </source>
</evidence>
<evidence type="ECO:0000255" key="2"/>
<evidence type="ECO:0000305" key="3"/>